<proteinExistence type="evidence at protein level"/>
<comment type="function">
    <text evidence="5 6 7 8 9 10 11">One of 8 partially redundant surface-active proteins required for efficient formation of aerial mycelium; the short chaplins assemble into a hydrophobic, amyloidal fibrillar surface layer that envelopes and protects aerial hyphae and spores, presumably anchored to the long chaplins (PubMed:12832396, PubMed:12832397, PubMed:15228525, PubMed:17462011). Chaplins have an overlapping function with the surface-active SapB peptide; chaplins are essential on minimal medium while on rich medium both chaplins and SapB are required for efficient aerial hyphae formation (PubMed:17462011). A minimal chaplin strain capable of forming aerial mycelium/hyphae on minimal medium contains ChpC, ChpE and ChpH. The strain also has restored rodlet formation on the hyphae surface (PubMed:18586935). The long chaplins (ChpA, ChpB, ChpC) are not absolutely necessary for short chaplin localization or rodlet formation, but probably play a role in initiating aerial hyphae development (PubMed:22296345). Chaplins are also involved in cell attachment to a hydrophobic surface (PubMed:19682261).</text>
</comment>
<comment type="subcellular location">
    <subcellularLocation>
        <location evidence="11">Secreted</location>
    </subcellularLocation>
    <subcellularLocation>
        <location evidence="2 11">Secreted</location>
        <location evidence="2 11">Cell wall</location>
        <topology evidence="2">Peptidoglycan-anchor</topology>
    </subcellularLocation>
    <text evidence="11">Anchored to the cell wall by sortase SrtE2 and to a lesser extent by sortase SrtE1.</text>
</comment>
<comment type="induction">
    <text evidence="6 13">Transcribed during aerial hyphae formation on minimal medium, about 10- to 25-fold lower expression than the short chaplins (Probable). Strongly induced during aerial hyphae formation and early sporulation on rich medium, under control of ECF sigma factor BldN (PubMed:12832397).</text>
</comment>
<comment type="disruption phenotype">
    <text evidence="5 6 7 8 10 11">A single chpC disruption and double chpC-chpH knockout have no phenotype; a quadruple chpA-chpC-chpD-chpH knockout has delayed aerial hyphae formation and sporulation. A quintuple chpA-chpB-chpC-chpD-chpH knockout has a longer delay in aerial hyphae formation and an almost complete lack of sporulation. The quintuple knockout still expresses ChpE, ChpF and ChpG (PubMed:12832397). Quintuple knockout chpA-chpB-chpC-chpD-chpH has strongly delayed aerial hyphae formation, makes many fewer aerial hyphae but no effect on viability of the spores produced. Further deletion of chpE leads to more severe effects, and on rich media few aerial hyphae are produced after prolonged growth. Those few hyphae do differentiate into spores and have a rodlet layer (PubMed:12832396). Deletion of all 8 chaplin genes on minimal medium leads to severely disrupted aerial hyphae that collapse on the colony surface and are not hydrophobic. A few spore chains can still be made, but they have neither rodlets or amyloid-like fibers. rdlA and rdlB mRNA are down-regulated (PubMed:15228525, PubMed:17462011). Deletion of all 8 chaplin genes on rich medium leads to a reduced abundance of aerial hyphae without rodlets and occasional spore chains on surface hyphae. A complete chaplin-negative plus ram-negative strain (deletion of ramR or the ramC-ramS-ramA-ramB operon) leads to the complete loss of robust aerial hyphae (PubMed:17462011). Deletion of the 3 long chaplins (ChpA-ChpB-ChpC) results in a 24 hour delay in aerial hyphae formation, while rodlets are about 1.5-fold longer than wild-type (PubMed:22296345). Deletion of all 8 chaplin genes significantly reduces cellular attachment to a hydrophobic substrate; thin fibrils instead of fimbrae are detected. The long chaplins (ChpA, ChpB and ChpC, as seen by near wild-type attachment of the hextuple chpA-chpB-chpC-chpD-chpE-chpH knockout) are not essential but may contribute to cellular attachment (PubMed:19682261).</text>
</comment>
<comment type="similarity">
    <text evidence="14">Belongs to the chaplin family. Long chaplin subfamily.</text>
</comment>
<evidence type="ECO:0000255" key="1"/>
<evidence type="ECO:0000255" key="2">
    <source>
        <dbReference type="PROSITE-ProRule" id="PRU00477"/>
    </source>
</evidence>
<evidence type="ECO:0000255" key="3">
    <source>
        <dbReference type="PROSITE-ProRule" id="PRU01232"/>
    </source>
</evidence>
<evidence type="ECO:0000256" key="4">
    <source>
        <dbReference type="SAM" id="MobiDB-lite"/>
    </source>
</evidence>
<evidence type="ECO:0000269" key="5">
    <source>
    </source>
</evidence>
<evidence type="ECO:0000269" key="6">
    <source>
    </source>
</evidence>
<evidence type="ECO:0000269" key="7">
    <source>
    </source>
</evidence>
<evidence type="ECO:0000269" key="8">
    <source>
    </source>
</evidence>
<evidence type="ECO:0000269" key="9">
    <source>
    </source>
</evidence>
<evidence type="ECO:0000269" key="10">
    <source>
    </source>
</evidence>
<evidence type="ECO:0000269" key="11">
    <source>
    </source>
</evidence>
<evidence type="ECO:0000303" key="12">
    <source>
    </source>
</evidence>
<evidence type="ECO:0000305" key="13">
    <source>
    </source>
</evidence>
<evidence type="ECO:0000305" key="14">
    <source>
    </source>
</evidence>
<evidence type="ECO:0000305" key="15">
    <source>
    </source>
</evidence>
<sequence length="259" mass="24519">MRQATRKGLMTMAAATGVIAAAGGAAHADSGAHGTSSGSPGVLSGNTVQAPVHVPVNVCGNTVDVVGVLNPAMGNACANQGGGASGGHGGHGGHGGYGDSGGEGGSHGGSHAGGHATDSPGVGSGNHVEVPIDVPVNVCGNSIDVVGALNPTTGNDCGNGGGGDHSTPPGDHETPPGEPHNPGNPGNPDTPDKPSGPDDETPGDSTDGNRPGAQTVDQPRGDAALAETGSDLPLGLALPVGAGALLAGTVLYRKARASV</sequence>
<protein>
    <recommendedName>
        <fullName evidence="12">Chaplin-C</fullName>
    </recommendedName>
</protein>
<dbReference type="EMBL" id="AL939109">
    <property type="protein sequence ID" value="CAC36377.1"/>
    <property type="molecule type" value="Genomic_DNA"/>
</dbReference>
<dbReference type="RefSeq" id="NP_625949.1">
    <property type="nucleotide sequence ID" value="NC_003888.3"/>
</dbReference>
<dbReference type="RefSeq" id="WP_011027911.1">
    <property type="nucleotide sequence ID" value="NZ_VNID01000018.1"/>
</dbReference>
<dbReference type="STRING" id="100226.gene:17759267"/>
<dbReference type="PaxDb" id="100226-SCO1674"/>
<dbReference type="KEGG" id="sco:SCO1674"/>
<dbReference type="PATRIC" id="fig|100226.15.peg.1691"/>
<dbReference type="eggNOG" id="ENOG5033GQX">
    <property type="taxonomic scope" value="Bacteria"/>
</dbReference>
<dbReference type="HOGENOM" id="CLU_070271_0_0_11"/>
<dbReference type="InParanoid" id="Q9AD93"/>
<dbReference type="OrthoDB" id="3544424at2"/>
<dbReference type="Proteomes" id="UP000001973">
    <property type="component" value="Chromosome"/>
</dbReference>
<dbReference type="GO" id="GO:0005576">
    <property type="term" value="C:extracellular region"/>
    <property type="evidence" value="ECO:0007669"/>
    <property type="project" value="UniProtKB-SubCell"/>
</dbReference>
<dbReference type="GO" id="GO:0007155">
    <property type="term" value="P:cell adhesion"/>
    <property type="evidence" value="ECO:0007669"/>
    <property type="project" value="UniProtKB-KW"/>
</dbReference>
<dbReference type="InterPro" id="IPR005528">
    <property type="entry name" value="ChpA-H"/>
</dbReference>
<dbReference type="InterPro" id="IPR019931">
    <property type="entry name" value="LPXTG_anchor"/>
</dbReference>
<dbReference type="InterPro" id="IPR006311">
    <property type="entry name" value="TAT_signal"/>
</dbReference>
<dbReference type="Pfam" id="PF03777">
    <property type="entry name" value="ChpA-C"/>
    <property type="match status" value="2"/>
</dbReference>
<dbReference type="PROSITE" id="PS51884">
    <property type="entry name" value="CHAPLIN"/>
    <property type="match status" value="2"/>
</dbReference>
<dbReference type="PROSITE" id="PS50847">
    <property type="entry name" value="GRAM_POS_ANCHORING"/>
    <property type="match status" value="1"/>
</dbReference>
<dbReference type="PROSITE" id="PS51318">
    <property type="entry name" value="TAT"/>
    <property type="match status" value="1"/>
</dbReference>
<feature type="signal peptide" evidence="1">
    <location>
        <begin position="1"/>
        <end position="28"/>
    </location>
</feature>
<feature type="chain" id="PRO_5004325719" description="Chaplin-C" evidence="1">
    <location>
        <begin position="29"/>
        <end position="259"/>
    </location>
</feature>
<feature type="propeptide" id="PRO_0000445190" description="Removed by sortase" evidence="2">
    <location>
        <begin position="229"/>
        <end position="259"/>
    </location>
</feature>
<feature type="domain" description="Chaplin 1" evidence="3">
    <location>
        <begin position="39"/>
        <end position="79"/>
    </location>
</feature>
<feature type="domain" description="Chaplin 2" evidence="3">
    <location>
        <begin position="119"/>
        <end position="159"/>
    </location>
</feature>
<feature type="region of interest" description="Disordered" evidence="4">
    <location>
        <begin position="84"/>
        <end position="129"/>
    </location>
</feature>
<feature type="region of interest" description="Disordered" evidence="4">
    <location>
        <begin position="154"/>
        <end position="227"/>
    </location>
</feature>
<feature type="short sequence motif" description="LPXTG sorting signal" evidence="2">
    <location>
        <begin position="225"/>
        <end position="229"/>
    </location>
</feature>
<feature type="compositionally biased region" description="Gly residues" evidence="4">
    <location>
        <begin position="84"/>
        <end position="112"/>
    </location>
</feature>
<feature type="compositionally biased region" description="Low complexity" evidence="4">
    <location>
        <begin position="180"/>
        <end position="189"/>
    </location>
</feature>
<feature type="modified residue" description="Pentaglycyl murein peptidoglycan amidated threonine" evidence="2 15">
    <location>
        <position position="228"/>
    </location>
</feature>
<gene>
    <name evidence="12" type="primary">chpC</name>
    <name type="ordered locus">SCO1674</name>
</gene>
<organism>
    <name type="scientific">Streptomyces coelicolor (strain ATCC BAA-471 / A3(2) / M145)</name>
    <dbReference type="NCBI Taxonomy" id="100226"/>
    <lineage>
        <taxon>Bacteria</taxon>
        <taxon>Bacillati</taxon>
        <taxon>Actinomycetota</taxon>
        <taxon>Actinomycetes</taxon>
        <taxon>Kitasatosporales</taxon>
        <taxon>Streptomycetaceae</taxon>
        <taxon>Streptomyces</taxon>
        <taxon>Streptomyces albidoflavus group</taxon>
    </lineage>
</organism>
<name>CHPC_STRCO</name>
<reference key="1">
    <citation type="journal article" date="2002" name="Nature">
        <title>Complete genome sequence of the model actinomycete Streptomyces coelicolor A3(2).</title>
        <authorList>
            <person name="Bentley S.D."/>
            <person name="Chater K.F."/>
            <person name="Cerdeno-Tarraga A.-M."/>
            <person name="Challis G.L."/>
            <person name="Thomson N.R."/>
            <person name="James K.D."/>
            <person name="Harris D.E."/>
            <person name="Quail M.A."/>
            <person name="Kieser H."/>
            <person name="Harper D."/>
            <person name="Bateman A."/>
            <person name="Brown S."/>
            <person name="Chandra G."/>
            <person name="Chen C.W."/>
            <person name="Collins M."/>
            <person name="Cronin A."/>
            <person name="Fraser A."/>
            <person name="Goble A."/>
            <person name="Hidalgo J."/>
            <person name="Hornsby T."/>
            <person name="Howarth S."/>
            <person name="Huang C.-H."/>
            <person name="Kieser T."/>
            <person name="Larke L."/>
            <person name="Murphy L.D."/>
            <person name="Oliver K."/>
            <person name="O'Neil S."/>
            <person name="Rabbinowitsch E."/>
            <person name="Rajandream M.A."/>
            <person name="Rutherford K.M."/>
            <person name="Rutter S."/>
            <person name="Seeger K."/>
            <person name="Saunders D."/>
            <person name="Sharp S."/>
            <person name="Squares R."/>
            <person name="Squares S."/>
            <person name="Taylor K."/>
            <person name="Warren T."/>
            <person name="Wietzorrek A."/>
            <person name="Woodward J.R."/>
            <person name="Barrell B.G."/>
            <person name="Parkhill J."/>
            <person name="Hopwood D.A."/>
        </authorList>
    </citation>
    <scope>NUCLEOTIDE SEQUENCE [LARGE SCALE GENOMIC DNA]</scope>
    <source>
        <strain>ATCC BAA-471 / A3(2) / M145</strain>
    </source>
</reference>
<reference key="2">
    <citation type="journal article" date="2003" name="Genes Dev.">
        <title>A novel class of secreted hydrophobic proteins is involved in aerial hyphae formation in Streptomyces coelicolor by forming amyloid-like fibrils.</title>
        <authorList>
            <person name="Claessen D."/>
            <person name="Rink R."/>
            <person name="de Jong W."/>
            <person name="Siebring J."/>
            <person name="de Vreugd P."/>
            <person name="Boersma F.G."/>
            <person name="Dijkhuizen L."/>
            <person name="Wosten H.A."/>
        </authorList>
    </citation>
    <scope>FUNCTION</scope>
    <scope>INDUCTION</scope>
    <scope>DISRUPTION PHENOTYPE</scope>
    <source>
        <strain>ATCC BAA-471 / A3(2) / M145</strain>
    </source>
</reference>
<reference key="3">
    <citation type="journal article" date="2003" name="Genes Dev.">
        <title>The chaplins: a family of hydrophobic cell-surface proteins involved in aerial mycelium formation in Streptomyces coelicolor.</title>
        <authorList>
            <person name="Elliot M.A."/>
            <person name="Karoonuthaisiri N."/>
            <person name="Huang J."/>
            <person name="Bibb M.J."/>
            <person name="Cohen S.N."/>
            <person name="Kao C.M."/>
            <person name="Buttner M.J."/>
        </authorList>
    </citation>
    <scope>FUNCTION</scope>
    <scope>INDUCTION</scope>
    <scope>DISRUPTION PHENOTYPE</scope>
    <source>
        <strain>A3(2) / M600</strain>
    </source>
</reference>
<reference key="4">
    <citation type="journal article" date="2004" name="Mol. Microbiol.">
        <title>The formation of the rodlet layer of streptomycetes is the result of the interplay between rodlins and chaplins.</title>
        <authorList>
            <person name="Claessen D."/>
            <person name="Stokroos I."/>
            <person name="Deelstra H.J."/>
            <person name="Penninga N.A."/>
            <person name="Bormann C."/>
            <person name="Salas J.A."/>
            <person name="Dijkhuizen L."/>
            <person name="Woesten H.A."/>
        </authorList>
    </citation>
    <scope>FUNCTION</scope>
    <scope>DISRUPTION PHENOTYPE</scope>
    <source>
        <strain>ATCC BAA-471 / A3(2) / M145</strain>
    </source>
</reference>
<reference key="5">
    <citation type="journal article" date="2007" name="Mol. Microbiol.">
        <title>SapB and the chaplins: connections between morphogenetic proteins in Streptomyces coelicolor.</title>
        <authorList>
            <person name="Capstick D.S."/>
            <person name="Willey J.M."/>
            <person name="Buttner M.J."/>
            <person name="Elliot M.A."/>
        </authorList>
    </citation>
    <scope>FUNCTION</scope>
    <scope>DISRUPTION PHENOTYPE</scope>
    <source>
        <strain>A3(2) / M600</strain>
    </source>
</reference>
<reference key="6">
    <citation type="journal article" date="2008" name="J. Bacteriol.">
        <title>Function and redundancy of the chaplin cell surface proteins in aerial hypha formation, rodlet assembly, and viability in Streptomyces coelicolor.</title>
        <authorList>
            <person name="Di Berardo C."/>
            <person name="Capstick D.S."/>
            <person name="Bibb M.J."/>
            <person name="Findlay K.C."/>
            <person name="Buttner M.J."/>
            <person name="Elliot M.A."/>
        </authorList>
    </citation>
    <scope>FUNCTION</scope>
    <scope>CREATION OF A MINIMAL CHAPLIN STRAIN</scope>
    <source>
        <strain>A3(2) / M600</strain>
    </source>
</reference>
<reference key="7">
    <citation type="journal article" date="2009" name="Mol. Microbiol.">
        <title>Attachment of Streptomyces coelicolor is mediated by amyloidal fimbriae that are anchored to the cell surface via cellulose.</title>
        <authorList>
            <person name="de Jong W."/>
            <person name="Woesten H.A."/>
            <person name="Dijkhuizen L."/>
            <person name="Claessen D."/>
        </authorList>
    </citation>
    <scope>FUNCTION IN GROWTH SUBSTRATE ATTACHMENT</scope>
    <scope>DISRUPTION PHENOTYPE</scope>
    <source>
        <strain>ATCC BAA-471 / A3(2) / M145</strain>
    </source>
</reference>
<reference key="8">
    <citation type="journal article" date="2012" name="Mol. Microbiol.">
        <title>Aerial development in Streptomyces coelicolor requires sortase activity.</title>
        <authorList>
            <person name="Duong A."/>
            <person name="Capstick D.S."/>
            <person name="Di Berardo C."/>
            <person name="Findlay K.C."/>
            <person name="Hesketh A."/>
            <person name="Hong H.J."/>
            <person name="Elliot M.A."/>
        </authorList>
    </citation>
    <scope>FUNCTION</scope>
    <scope>SUBCELLULAR LOCATION</scope>
    <scope>DISRUPTION PHENOTYPE</scope>
    <source>
        <strain>A3(2) / M600</strain>
    </source>
</reference>
<accession>Q9AD93</accession>
<keyword id="KW-0034">Amyloid</keyword>
<keyword id="KW-0130">Cell adhesion</keyword>
<keyword id="KW-0134">Cell wall</keyword>
<keyword id="KW-0572">Peptidoglycan-anchor</keyword>
<keyword id="KW-1185">Reference proteome</keyword>
<keyword id="KW-0677">Repeat</keyword>
<keyword id="KW-0964">Secreted</keyword>
<keyword id="KW-0732">Signal</keyword>